<protein>
    <recommendedName>
        <fullName evidence="1">Cytoskeleton protein RodZ</fullName>
    </recommendedName>
</protein>
<gene>
    <name evidence="1" type="primary">rodZ</name>
    <name type="ordered locus">SFV_2563</name>
</gene>
<feature type="chain" id="PRO_0000361866" description="Cytoskeleton protein RodZ">
    <location>
        <begin position="1"/>
        <end position="337"/>
    </location>
</feature>
<feature type="topological domain" description="Cytoplasmic" evidence="1">
    <location>
        <begin position="1"/>
        <end position="111"/>
    </location>
</feature>
<feature type="transmembrane region" description="Helical; Signal-anchor for type II membrane protein" evidence="1">
    <location>
        <begin position="112"/>
        <end position="132"/>
    </location>
</feature>
<feature type="topological domain" description="Periplasmic" evidence="1">
    <location>
        <begin position="133"/>
        <end position="337"/>
    </location>
</feature>
<feature type="domain" description="HTH cro/C1-type" evidence="1">
    <location>
        <begin position="19"/>
        <end position="71"/>
    </location>
</feature>
<feature type="DNA-binding region" description="H-T-H motif" evidence="1">
    <location>
        <begin position="30"/>
        <end position="49"/>
    </location>
</feature>
<feature type="region of interest" description="Disordered" evidence="2">
    <location>
        <begin position="145"/>
        <end position="218"/>
    </location>
</feature>
<feature type="compositionally biased region" description="Polar residues" evidence="2">
    <location>
        <begin position="145"/>
        <end position="167"/>
    </location>
</feature>
<feature type="compositionally biased region" description="Low complexity" evidence="2">
    <location>
        <begin position="168"/>
        <end position="207"/>
    </location>
</feature>
<feature type="compositionally biased region" description="Polar residues" evidence="2">
    <location>
        <begin position="208"/>
        <end position="218"/>
    </location>
</feature>
<evidence type="ECO:0000255" key="1">
    <source>
        <dbReference type="HAMAP-Rule" id="MF_02017"/>
    </source>
</evidence>
<evidence type="ECO:0000256" key="2">
    <source>
        <dbReference type="SAM" id="MobiDB-lite"/>
    </source>
</evidence>
<keyword id="KW-0997">Cell inner membrane</keyword>
<keyword id="KW-1003">Cell membrane</keyword>
<keyword id="KW-0133">Cell shape</keyword>
<keyword id="KW-0238">DNA-binding</keyword>
<keyword id="KW-0472">Membrane</keyword>
<keyword id="KW-0735">Signal-anchor</keyword>
<keyword id="KW-0812">Transmembrane</keyword>
<keyword id="KW-1133">Transmembrane helix</keyword>
<organism>
    <name type="scientific">Shigella flexneri serotype 5b (strain 8401)</name>
    <dbReference type="NCBI Taxonomy" id="373384"/>
    <lineage>
        <taxon>Bacteria</taxon>
        <taxon>Pseudomonadati</taxon>
        <taxon>Pseudomonadota</taxon>
        <taxon>Gammaproteobacteria</taxon>
        <taxon>Enterobacterales</taxon>
        <taxon>Enterobacteriaceae</taxon>
        <taxon>Shigella</taxon>
    </lineage>
</organism>
<reference key="1">
    <citation type="journal article" date="2006" name="BMC Genomics">
        <title>Complete genome sequence of Shigella flexneri 5b and comparison with Shigella flexneri 2a.</title>
        <authorList>
            <person name="Nie H."/>
            <person name="Yang F."/>
            <person name="Zhang X."/>
            <person name="Yang J."/>
            <person name="Chen L."/>
            <person name="Wang J."/>
            <person name="Xiong Z."/>
            <person name="Peng J."/>
            <person name="Sun L."/>
            <person name="Dong J."/>
            <person name="Xue Y."/>
            <person name="Xu X."/>
            <person name="Chen S."/>
            <person name="Yao Z."/>
            <person name="Shen Y."/>
            <person name="Jin Q."/>
        </authorList>
    </citation>
    <scope>NUCLEOTIDE SEQUENCE [LARGE SCALE GENOMIC DNA]</scope>
    <source>
        <strain>8401</strain>
    </source>
</reference>
<dbReference type="EMBL" id="CP000266">
    <property type="protein sequence ID" value="ABF04662.1"/>
    <property type="molecule type" value="Genomic_DNA"/>
</dbReference>
<dbReference type="RefSeq" id="WP_001090857.1">
    <property type="nucleotide sequence ID" value="NC_008258.1"/>
</dbReference>
<dbReference type="SMR" id="Q0T203"/>
<dbReference type="GeneID" id="93774620"/>
<dbReference type="KEGG" id="sfv:SFV_2563"/>
<dbReference type="HOGENOM" id="CLU_047530_3_1_6"/>
<dbReference type="Proteomes" id="UP000000659">
    <property type="component" value="Chromosome"/>
</dbReference>
<dbReference type="GO" id="GO:0005886">
    <property type="term" value="C:plasma membrane"/>
    <property type="evidence" value="ECO:0007669"/>
    <property type="project" value="UniProtKB-SubCell"/>
</dbReference>
<dbReference type="GO" id="GO:0003677">
    <property type="term" value="F:DNA binding"/>
    <property type="evidence" value="ECO:0007669"/>
    <property type="project" value="UniProtKB-KW"/>
</dbReference>
<dbReference type="GO" id="GO:0008360">
    <property type="term" value="P:regulation of cell shape"/>
    <property type="evidence" value="ECO:0007669"/>
    <property type="project" value="UniProtKB-UniRule"/>
</dbReference>
<dbReference type="CDD" id="cd00093">
    <property type="entry name" value="HTH_XRE"/>
    <property type="match status" value="1"/>
</dbReference>
<dbReference type="FunFam" id="1.10.260.40:FF:000014">
    <property type="entry name" value="Cytoskeleton protein RodZ"/>
    <property type="match status" value="1"/>
</dbReference>
<dbReference type="Gene3D" id="1.10.260.40">
    <property type="entry name" value="lambda repressor-like DNA-binding domains"/>
    <property type="match status" value="1"/>
</dbReference>
<dbReference type="HAMAP" id="MF_02017">
    <property type="entry name" value="RodZ"/>
    <property type="match status" value="1"/>
</dbReference>
<dbReference type="InterPro" id="IPR050400">
    <property type="entry name" value="Bact_Cytoskel_RodZ"/>
</dbReference>
<dbReference type="InterPro" id="IPR001387">
    <property type="entry name" value="Cro/C1-type_HTH"/>
</dbReference>
<dbReference type="InterPro" id="IPR010982">
    <property type="entry name" value="Lambda_DNA-bd_dom_sf"/>
</dbReference>
<dbReference type="InterPro" id="IPR023690">
    <property type="entry name" value="RodZ"/>
</dbReference>
<dbReference type="InterPro" id="IPR025194">
    <property type="entry name" value="RodZ-like_C"/>
</dbReference>
<dbReference type="NCBIfam" id="NF008109">
    <property type="entry name" value="PRK10856.1"/>
    <property type="match status" value="1"/>
</dbReference>
<dbReference type="PANTHER" id="PTHR34475">
    <property type="match status" value="1"/>
</dbReference>
<dbReference type="PANTHER" id="PTHR34475:SF1">
    <property type="entry name" value="CYTOSKELETON PROTEIN RODZ"/>
    <property type="match status" value="1"/>
</dbReference>
<dbReference type="Pfam" id="PF13413">
    <property type="entry name" value="HTH_25"/>
    <property type="match status" value="1"/>
</dbReference>
<dbReference type="Pfam" id="PF13464">
    <property type="entry name" value="RodZ_C"/>
    <property type="match status" value="1"/>
</dbReference>
<dbReference type="SMART" id="SM00530">
    <property type="entry name" value="HTH_XRE"/>
    <property type="match status" value="1"/>
</dbReference>
<dbReference type="SUPFAM" id="SSF47413">
    <property type="entry name" value="lambda repressor-like DNA-binding domains"/>
    <property type="match status" value="1"/>
</dbReference>
<dbReference type="PROSITE" id="PS50943">
    <property type="entry name" value="HTH_CROC1"/>
    <property type="match status" value="1"/>
</dbReference>
<sequence length="337" mass="36173">MNTEATHDQNEALTTGARLRNAREQLGLSQQAVAERLCLKVSTVRDIEEDKAPADLASTFLRGYIRSYARLVHIPEEELLPGLEKQAPLRAAKVAPMQSFSLGKRRKKRDGWLMTFTWLVLFVVIGLSGAWWWQDHKAQQEEITTMADQSSAELSSNSEQGQSVPLNTSTTTDPATTSTPPASVDTTATNTQTPAVTAPAPAVDPQQNAVVSPSQANVDTAATPVPTAATTPDGAAPLPTDQAGVTTPAADPNALVMNFTADCWLEVTDATGKKLFSGMQRKDGNLNLTGQAPYKLKIGAPAAVQIQYQGKPVDLSRFIRTNQVARLTLNAEQSPAQ</sequence>
<name>RODZ_SHIF8</name>
<accession>Q0T203</accession>
<comment type="function">
    <text evidence="1">Cytoskeletal protein that is involved in cell-shape control through regulation of the length of the long axis.</text>
</comment>
<comment type="subcellular location">
    <subcellularLocation>
        <location evidence="1">Cell inner membrane</location>
        <topology evidence="1">Single-pass type II membrane protein</topology>
    </subcellularLocation>
    <text evidence="1">Forms helical filaments along the long axis of the cell.</text>
</comment>
<comment type="domain">
    <text evidence="1">The helix-turn-helix (HTH) motif in the cytoplasmic domain of the N-terminus is involved in the formation of spirals to maintain the rigid rod shape. As this protein is anchored in the cytoplasmic membrane, the HTH motif may contribute to protein-protein interactions to form the RodZ helix, which is localized beneath the cytoplasmic membrane. The C-terminal domain may be critical for determination of the rod shape by probably interacting with enzymes required for synthesis of the peptidoglycan layer, including PBPs in the periplasm.</text>
</comment>
<comment type="similarity">
    <text evidence="1">Belongs to the RodZ family.</text>
</comment>
<proteinExistence type="inferred from homology"/>